<keyword id="KW-0963">Cytoplasm</keyword>
<keyword id="KW-1017">Isopeptide bond</keyword>
<keyword id="KW-1185">Reference proteome</keyword>
<keyword id="KW-0819">tRNA processing</keyword>
<keyword id="KW-0833">Ubl conjugation pathway</keyword>
<feature type="chain" id="PRO_0000367854" description="Ubiquitin-related modifier 1 homolog">
    <location>
        <begin position="1"/>
        <end position="109"/>
    </location>
</feature>
<feature type="modified residue" description="1-thioglycine" evidence="1">
    <location>
        <position position="109"/>
    </location>
</feature>
<feature type="cross-link" description="Glycyl lysine isopeptide (Gly-Lys) (interchain with K-? in acceptor proteins)" evidence="1">
    <location>
        <position position="109"/>
    </location>
</feature>
<name>URM1_CULQU</name>
<protein>
    <recommendedName>
        <fullName evidence="1">Ubiquitin-related modifier 1 homolog</fullName>
    </recommendedName>
</protein>
<evidence type="ECO:0000255" key="1">
    <source>
        <dbReference type="HAMAP-Rule" id="MF_03048"/>
    </source>
</evidence>
<dbReference type="EMBL" id="DS231833">
    <property type="protein sequence ID" value="EDS32219.1"/>
    <property type="molecule type" value="Genomic_DNA"/>
</dbReference>
<dbReference type="RefSeq" id="XP_001843356.1">
    <property type="nucleotide sequence ID" value="XM_001843304.1"/>
</dbReference>
<dbReference type="SMR" id="B0W3S2"/>
<dbReference type="FunCoup" id="B0W3S2">
    <property type="interactions" value="1379"/>
</dbReference>
<dbReference type="STRING" id="7176.B0W3S2"/>
<dbReference type="EnsemblMetazoa" id="CPIJ002088-RA">
    <property type="protein sequence ID" value="CPIJ002088-PA"/>
    <property type="gene ID" value="CPIJ002088"/>
</dbReference>
<dbReference type="KEGG" id="cqu:CpipJ_CPIJ002088"/>
<dbReference type="CTD" id="81605"/>
<dbReference type="VEuPathDB" id="VectorBase:CPIJ002088"/>
<dbReference type="VEuPathDB" id="VectorBase:CQUJHB003564"/>
<dbReference type="eggNOG" id="KOG4146">
    <property type="taxonomic scope" value="Eukaryota"/>
</dbReference>
<dbReference type="HOGENOM" id="CLU_148208_0_0_1"/>
<dbReference type="InParanoid" id="B0W3S2"/>
<dbReference type="OMA" id="DYELQPN"/>
<dbReference type="OrthoDB" id="10248987at2759"/>
<dbReference type="PhylomeDB" id="B0W3S2"/>
<dbReference type="UniPathway" id="UPA00988"/>
<dbReference type="Proteomes" id="UP000002320">
    <property type="component" value="Unassembled WGS sequence"/>
</dbReference>
<dbReference type="GO" id="GO:0005829">
    <property type="term" value="C:cytosol"/>
    <property type="evidence" value="ECO:0007669"/>
    <property type="project" value="UniProtKB-UniRule"/>
</dbReference>
<dbReference type="GO" id="GO:0032447">
    <property type="term" value="P:protein urmylation"/>
    <property type="evidence" value="ECO:0007669"/>
    <property type="project" value="UniProtKB-UniRule"/>
</dbReference>
<dbReference type="GO" id="GO:0034227">
    <property type="term" value="P:tRNA thio-modification"/>
    <property type="evidence" value="ECO:0007669"/>
    <property type="project" value="UniProtKB-UniRule"/>
</dbReference>
<dbReference type="GO" id="GO:0002098">
    <property type="term" value="P:tRNA wobble uridine modification"/>
    <property type="evidence" value="ECO:0007669"/>
    <property type="project" value="UniProtKB-UniRule"/>
</dbReference>
<dbReference type="CDD" id="cd01764">
    <property type="entry name" value="Ubl_Urm1"/>
    <property type="match status" value="1"/>
</dbReference>
<dbReference type="Gene3D" id="3.10.20.30">
    <property type="match status" value="1"/>
</dbReference>
<dbReference type="HAMAP" id="MF_03048">
    <property type="entry name" value="Urm1"/>
    <property type="match status" value="1"/>
</dbReference>
<dbReference type="InterPro" id="IPR012675">
    <property type="entry name" value="Beta-grasp_dom_sf"/>
</dbReference>
<dbReference type="InterPro" id="IPR016155">
    <property type="entry name" value="Mopterin_synth/thiamin_S_b"/>
</dbReference>
<dbReference type="InterPro" id="IPR015221">
    <property type="entry name" value="Urm1"/>
</dbReference>
<dbReference type="PANTHER" id="PTHR14986">
    <property type="entry name" value="RURM1 PROTEIN"/>
    <property type="match status" value="1"/>
</dbReference>
<dbReference type="Pfam" id="PF09138">
    <property type="entry name" value="Urm1"/>
    <property type="match status" value="1"/>
</dbReference>
<dbReference type="PIRSF" id="PIRSF037379">
    <property type="entry name" value="Ubiquitin-related_modifier_1"/>
    <property type="match status" value="1"/>
</dbReference>
<dbReference type="SUPFAM" id="SSF54285">
    <property type="entry name" value="MoaD/ThiS"/>
    <property type="match status" value="1"/>
</dbReference>
<comment type="function">
    <text evidence="1">Acts as a sulfur carrier required for 2-thiolation of mcm(5)S(2)U at tRNA wobble positions of cytosolic tRNA(Lys), tRNA(Glu) and tRNA(Gln). Serves as sulfur donor in tRNA 2-thiolation reaction by being thiocarboxylated (-COSH) at its C-terminus by MOCS3. The sulfur is then transferred to tRNA to form 2-thiolation of mcm(5)S(2)U. Also acts as a ubiquitin-like protein (UBL) that is covalently conjugated via an isopeptide bond to lysine residues of target proteins. The thiocarboxylated form serves as substrate for conjugation and oxidative stress specifically induces the formation of UBL-protein conjugates.</text>
</comment>
<comment type="pathway">
    <text evidence="1">tRNA modification; 5-methoxycarbonylmethyl-2-thiouridine-tRNA biosynthesis.</text>
</comment>
<comment type="subcellular location">
    <subcellularLocation>
        <location evidence="1">Cytoplasm</location>
    </subcellularLocation>
</comment>
<comment type="PTM">
    <text evidence="1">C-terminal thiocarboxylation occurs in 2 steps, it is first acyl-adenylated (-COAMP) via the hesA/moeB/thiF part of the MOCS3 homolog, then thiocarboxylated (-COSH) via the rhodanese domain of the MOCS3 homolog.</text>
</comment>
<comment type="similarity">
    <text evidence="1">Belongs to the URM1 family.</text>
</comment>
<sequence length="109" mass="11975">MDDTIDDEVISAGSTITVEFSGGAETLFGGVREHVVPLDGSKIVLLEEMLRWLRDNLLTGDAGLFMQENTVRPGILVMINDTDWDLMGEIDYILQPGDHILFISTLHGG</sequence>
<accession>B0W3S2</accession>
<reference key="1">
    <citation type="submission" date="2007-03" db="EMBL/GenBank/DDBJ databases">
        <title>Annotation of Culex pipiens quinquefasciatus.</title>
        <authorList>
            <consortium name="The Broad Institute Genome Sequencing Platform"/>
            <person name="Atkinson P.W."/>
            <person name="Hemingway J."/>
            <person name="Christensen B.M."/>
            <person name="Higgs S."/>
            <person name="Kodira C.D."/>
            <person name="Hannick L.I."/>
            <person name="Megy K."/>
            <person name="O'Leary S.B."/>
            <person name="Pearson M."/>
            <person name="Haas B.J."/>
            <person name="Mauceli E."/>
            <person name="Wortman J.R."/>
            <person name="Lee N.H."/>
            <person name="Guigo R."/>
            <person name="Stanke M."/>
            <person name="Alvarado L."/>
            <person name="Amedeo P."/>
            <person name="Antoine C.H."/>
            <person name="Arensburger P."/>
            <person name="Bidwell S.L."/>
            <person name="Crawford M."/>
            <person name="Camaro F."/>
            <person name="Devon K."/>
            <person name="Engels R."/>
            <person name="Hammond M."/>
            <person name="Howarth C."/>
            <person name="Koehrsen M."/>
            <person name="Lawson D."/>
            <person name="Montgomery P."/>
            <person name="Nene V."/>
            <person name="Nusbaum C."/>
            <person name="Puiu D."/>
            <person name="Romero-Severson J."/>
            <person name="Severson D.W."/>
            <person name="Shumway M."/>
            <person name="Sisk P."/>
            <person name="Stolte C."/>
            <person name="Zeng Q."/>
            <person name="Eisenstadt E."/>
            <person name="Fraser-Liggett C.M."/>
            <person name="Strausberg R."/>
            <person name="Galagan J."/>
            <person name="Birren B."/>
            <person name="Collins F.H."/>
        </authorList>
    </citation>
    <scope>NUCLEOTIDE SEQUENCE [LARGE SCALE GENOMIC DNA]</scope>
    <source>
        <strain>JHB</strain>
    </source>
</reference>
<gene>
    <name type="ORF">CPIJ002088</name>
</gene>
<proteinExistence type="inferred from homology"/>
<organism>
    <name type="scientific">Culex quinquefasciatus</name>
    <name type="common">Southern house mosquito</name>
    <name type="synonym">Culex pungens</name>
    <dbReference type="NCBI Taxonomy" id="7176"/>
    <lineage>
        <taxon>Eukaryota</taxon>
        <taxon>Metazoa</taxon>
        <taxon>Ecdysozoa</taxon>
        <taxon>Arthropoda</taxon>
        <taxon>Hexapoda</taxon>
        <taxon>Insecta</taxon>
        <taxon>Pterygota</taxon>
        <taxon>Neoptera</taxon>
        <taxon>Endopterygota</taxon>
        <taxon>Diptera</taxon>
        <taxon>Nematocera</taxon>
        <taxon>Culicoidea</taxon>
        <taxon>Culicidae</taxon>
        <taxon>Culicinae</taxon>
        <taxon>Culicini</taxon>
        <taxon>Culex</taxon>
        <taxon>Culex</taxon>
    </lineage>
</organism>